<proteinExistence type="evidence at protein level"/>
<reference key="1">
    <citation type="journal article" date="1995" name="J. Biol. Chem.">
        <title>Isolation of cDNA clones encoding eight different human G protein gamma subunits, including three novel forms designated the gamma 4, gamma 10, and gamma 11 subunits.</title>
        <authorList>
            <person name="Ray K."/>
            <person name="Kunsch C."/>
            <person name="Bonner L.M."/>
            <person name="Robishaw J.D."/>
        </authorList>
    </citation>
    <scope>NUCLEOTIDE SEQUENCE [MRNA]</scope>
    <scope>ISOPRENYLATION AT CYS-65</scope>
</reference>
<reference key="2">
    <citation type="submission" date="2002-03" db="EMBL/GenBank/DDBJ databases">
        <title>cDNA clones of human proteins involved in signal transduction sequenced by the Guthrie cDNA resource center (www.cdna.org).</title>
        <authorList>
            <person name="Puhl H.L. III"/>
            <person name="Ikeda S.R."/>
            <person name="Aronstam R.S."/>
        </authorList>
    </citation>
    <scope>NUCLEOTIDE SEQUENCE [LARGE SCALE MRNA]</scope>
</reference>
<reference key="3">
    <citation type="journal article" date="2004" name="Nature">
        <title>DNA sequence and analysis of human chromosome 9.</title>
        <authorList>
            <person name="Humphray S.J."/>
            <person name="Oliver K."/>
            <person name="Hunt A.R."/>
            <person name="Plumb R.W."/>
            <person name="Loveland J.E."/>
            <person name="Howe K.L."/>
            <person name="Andrews T.D."/>
            <person name="Searle S."/>
            <person name="Hunt S.E."/>
            <person name="Scott C.E."/>
            <person name="Jones M.C."/>
            <person name="Ainscough R."/>
            <person name="Almeida J.P."/>
            <person name="Ambrose K.D."/>
            <person name="Ashwell R.I.S."/>
            <person name="Babbage A.K."/>
            <person name="Babbage S."/>
            <person name="Bagguley C.L."/>
            <person name="Bailey J."/>
            <person name="Banerjee R."/>
            <person name="Barker D.J."/>
            <person name="Barlow K.F."/>
            <person name="Bates K."/>
            <person name="Beasley H."/>
            <person name="Beasley O."/>
            <person name="Bird C.P."/>
            <person name="Bray-Allen S."/>
            <person name="Brown A.J."/>
            <person name="Brown J.Y."/>
            <person name="Burford D."/>
            <person name="Burrill W."/>
            <person name="Burton J."/>
            <person name="Carder C."/>
            <person name="Carter N.P."/>
            <person name="Chapman J.C."/>
            <person name="Chen Y."/>
            <person name="Clarke G."/>
            <person name="Clark S.Y."/>
            <person name="Clee C.M."/>
            <person name="Clegg S."/>
            <person name="Collier R.E."/>
            <person name="Corby N."/>
            <person name="Crosier M."/>
            <person name="Cummings A.T."/>
            <person name="Davies J."/>
            <person name="Dhami P."/>
            <person name="Dunn M."/>
            <person name="Dutta I."/>
            <person name="Dyer L.W."/>
            <person name="Earthrowl M.E."/>
            <person name="Faulkner L."/>
            <person name="Fleming C.J."/>
            <person name="Frankish A."/>
            <person name="Frankland J.A."/>
            <person name="French L."/>
            <person name="Fricker D.G."/>
            <person name="Garner P."/>
            <person name="Garnett J."/>
            <person name="Ghori J."/>
            <person name="Gilbert J.G.R."/>
            <person name="Glison C."/>
            <person name="Grafham D.V."/>
            <person name="Gribble S."/>
            <person name="Griffiths C."/>
            <person name="Griffiths-Jones S."/>
            <person name="Grocock R."/>
            <person name="Guy J."/>
            <person name="Hall R.E."/>
            <person name="Hammond S."/>
            <person name="Harley J.L."/>
            <person name="Harrison E.S.I."/>
            <person name="Hart E.A."/>
            <person name="Heath P.D."/>
            <person name="Henderson C.D."/>
            <person name="Hopkins B.L."/>
            <person name="Howard P.J."/>
            <person name="Howden P.J."/>
            <person name="Huckle E."/>
            <person name="Johnson C."/>
            <person name="Johnson D."/>
            <person name="Joy A.A."/>
            <person name="Kay M."/>
            <person name="Keenan S."/>
            <person name="Kershaw J.K."/>
            <person name="Kimberley A.M."/>
            <person name="King A."/>
            <person name="Knights A."/>
            <person name="Laird G.K."/>
            <person name="Langford C."/>
            <person name="Lawlor S."/>
            <person name="Leongamornlert D.A."/>
            <person name="Leversha M."/>
            <person name="Lloyd C."/>
            <person name="Lloyd D.M."/>
            <person name="Lovell J."/>
            <person name="Martin S."/>
            <person name="Mashreghi-Mohammadi M."/>
            <person name="Matthews L."/>
            <person name="McLaren S."/>
            <person name="McLay K.E."/>
            <person name="McMurray A."/>
            <person name="Milne S."/>
            <person name="Nickerson T."/>
            <person name="Nisbett J."/>
            <person name="Nordsiek G."/>
            <person name="Pearce A.V."/>
            <person name="Peck A.I."/>
            <person name="Porter K.M."/>
            <person name="Pandian R."/>
            <person name="Pelan S."/>
            <person name="Phillimore B."/>
            <person name="Povey S."/>
            <person name="Ramsey Y."/>
            <person name="Rand V."/>
            <person name="Scharfe M."/>
            <person name="Sehra H.K."/>
            <person name="Shownkeen R."/>
            <person name="Sims S.K."/>
            <person name="Skuce C.D."/>
            <person name="Smith M."/>
            <person name="Steward C.A."/>
            <person name="Swarbreck D."/>
            <person name="Sycamore N."/>
            <person name="Tester J."/>
            <person name="Thorpe A."/>
            <person name="Tracey A."/>
            <person name="Tromans A."/>
            <person name="Thomas D.W."/>
            <person name="Wall M."/>
            <person name="Wallis J.M."/>
            <person name="West A.P."/>
            <person name="Whitehead S.L."/>
            <person name="Willey D.L."/>
            <person name="Williams S.A."/>
            <person name="Wilming L."/>
            <person name="Wray P.W."/>
            <person name="Young L."/>
            <person name="Ashurst J.L."/>
            <person name="Coulson A."/>
            <person name="Blocker H."/>
            <person name="Durbin R.M."/>
            <person name="Sulston J.E."/>
            <person name="Hubbard T."/>
            <person name="Jackson M.J."/>
            <person name="Bentley D.R."/>
            <person name="Beck S."/>
            <person name="Rogers J."/>
            <person name="Dunham I."/>
        </authorList>
    </citation>
    <scope>NUCLEOTIDE SEQUENCE [LARGE SCALE GENOMIC DNA]</scope>
</reference>
<reference key="4">
    <citation type="journal article" date="2004" name="Genome Res.">
        <title>The status, quality, and expansion of the NIH full-length cDNA project: the Mammalian Gene Collection (MGC).</title>
        <authorList>
            <consortium name="The MGC Project Team"/>
        </authorList>
    </citation>
    <scope>NUCLEOTIDE SEQUENCE [LARGE SCALE MRNA]</scope>
    <source>
        <tissue>Brain</tissue>
        <tissue>Lung</tissue>
    </source>
</reference>
<reference key="5">
    <citation type="journal article" date="2012" name="Proc. Natl. Acad. Sci. U.S.A.">
        <title>N-terminal acetylome analyses and functional insights of the N-terminal acetyltransferase NatB.</title>
        <authorList>
            <person name="Van Damme P."/>
            <person name="Lasa M."/>
            <person name="Polevoda B."/>
            <person name="Gazquez C."/>
            <person name="Elosegui-Artola A."/>
            <person name="Kim D.S."/>
            <person name="De Juan-Pardo E."/>
            <person name="Demeyer K."/>
            <person name="Hole K."/>
            <person name="Larrea E."/>
            <person name="Timmerman E."/>
            <person name="Prieto J."/>
            <person name="Arnesen T."/>
            <person name="Sherman F."/>
            <person name="Gevaert K."/>
            <person name="Aldabe R."/>
        </authorList>
    </citation>
    <scope>ACETYLATION [LARGE SCALE ANALYSIS] AT SER-2</scope>
    <scope>CLEAVAGE OF INITIATOR METHIONINE [LARGE SCALE ANALYSIS]</scope>
    <scope>IDENTIFICATION BY MASS SPECTROMETRY [LARGE SCALE ANALYSIS]</scope>
</reference>
<dbReference type="EMBL" id="U31383">
    <property type="protein sequence ID" value="AAC50205.1"/>
    <property type="molecule type" value="mRNA"/>
</dbReference>
<dbReference type="EMBL" id="AF493877">
    <property type="protein sequence ID" value="AAM12591.1"/>
    <property type="molecule type" value="mRNA"/>
</dbReference>
<dbReference type="EMBL" id="AL135787">
    <property type="status" value="NOT_ANNOTATED_CDS"/>
    <property type="molecule type" value="Genomic_DNA"/>
</dbReference>
<dbReference type="EMBL" id="BC010384">
    <property type="protein sequence ID" value="AAH10384.1"/>
    <property type="molecule type" value="mRNA"/>
</dbReference>
<dbReference type="EMBL" id="BC015206">
    <property type="status" value="NOT_ANNOTATED_CDS"/>
    <property type="molecule type" value="mRNA"/>
</dbReference>
<dbReference type="EMBL" id="BC016319">
    <property type="protein sequence ID" value="AAH16319.1"/>
    <property type="molecule type" value="mRNA"/>
</dbReference>
<dbReference type="EMBL" id="BC072671">
    <property type="protein sequence ID" value="AAH72671.1"/>
    <property type="molecule type" value="mRNA"/>
</dbReference>
<dbReference type="EMBL" id="BC107574">
    <property type="protein sequence ID" value="AAI07575.1"/>
    <property type="molecule type" value="mRNA"/>
</dbReference>
<dbReference type="CCDS" id="CCDS35107.1"/>
<dbReference type="PIR" id="I39158">
    <property type="entry name" value="I39158"/>
</dbReference>
<dbReference type="RefSeq" id="NP_001017998.1">
    <property type="nucleotide sequence ID" value="NM_001017998.4"/>
</dbReference>
<dbReference type="RefSeq" id="NP_001185593.1">
    <property type="nucleotide sequence ID" value="NM_001198664.2"/>
</dbReference>
<dbReference type="SMR" id="P50151"/>
<dbReference type="BioGRID" id="109052">
    <property type="interactions" value="46"/>
</dbReference>
<dbReference type="CORUM" id="P50151"/>
<dbReference type="FunCoup" id="P50151">
    <property type="interactions" value="1713"/>
</dbReference>
<dbReference type="IntAct" id="P50151">
    <property type="interactions" value="39"/>
</dbReference>
<dbReference type="STRING" id="9606.ENSP00000363411"/>
<dbReference type="iPTMnet" id="P50151"/>
<dbReference type="PhosphoSitePlus" id="P50151"/>
<dbReference type="BioMuta" id="GNG10"/>
<dbReference type="DMDM" id="1730222"/>
<dbReference type="jPOST" id="P50151"/>
<dbReference type="MassIVE" id="P50151"/>
<dbReference type="PaxDb" id="9606-ENSP00000363411"/>
<dbReference type="PeptideAtlas" id="P50151"/>
<dbReference type="ProteomicsDB" id="56200"/>
<dbReference type="Pumba" id="P50151"/>
<dbReference type="Antibodypedia" id="76916">
    <property type="antibodies" value="53 antibodies from 13 providers"/>
</dbReference>
<dbReference type="DNASU" id="2790"/>
<dbReference type="Ensembl" id="ENST00000374293.5">
    <property type="protein sequence ID" value="ENSP00000363411.3"/>
    <property type="gene ID" value="ENSG00000242616.4"/>
</dbReference>
<dbReference type="GeneID" id="2790"/>
<dbReference type="KEGG" id="hsa:2790"/>
<dbReference type="MANE-Select" id="ENST00000374293.5">
    <property type="protein sequence ID" value="ENSP00000363411.3"/>
    <property type="RefSeq nucleotide sequence ID" value="NM_001017998.4"/>
    <property type="RefSeq protein sequence ID" value="NP_001017998.1"/>
</dbReference>
<dbReference type="UCSC" id="uc004bfp.4">
    <property type="organism name" value="human"/>
</dbReference>
<dbReference type="AGR" id="HGNC:4402"/>
<dbReference type="CTD" id="2790"/>
<dbReference type="DisGeNET" id="2790"/>
<dbReference type="GeneCards" id="GNG10"/>
<dbReference type="HGNC" id="HGNC:4402">
    <property type="gene designation" value="GNG10"/>
</dbReference>
<dbReference type="HPA" id="ENSG00000242616">
    <property type="expression patterns" value="Low tissue specificity"/>
</dbReference>
<dbReference type="MIM" id="604389">
    <property type="type" value="gene"/>
</dbReference>
<dbReference type="neXtProt" id="NX_P50151"/>
<dbReference type="OpenTargets" id="ENSG00000242616"/>
<dbReference type="PharmGKB" id="PA28781"/>
<dbReference type="VEuPathDB" id="HostDB:ENSG00000242616"/>
<dbReference type="eggNOG" id="KOG4119">
    <property type="taxonomic scope" value="Eukaryota"/>
</dbReference>
<dbReference type="GeneTree" id="ENSGT01100000263525"/>
<dbReference type="HOGENOM" id="CLU_168377_3_0_1"/>
<dbReference type="InParanoid" id="P50151"/>
<dbReference type="OMA" id="YREPRSC"/>
<dbReference type="OrthoDB" id="6264244at2759"/>
<dbReference type="PAN-GO" id="P50151">
    <property type="GO annotations" value="3 GO annotations based on evolutionary models"/>
</dbReference>
<dbReference type="PhylomeDB" id="P50151"/>
<dbReference type="TreeFam" id="TF319909"/>
<dbReference type="PathwayCommons" id="P50151"/>
<dbReference type="Reactome" id="R-HSA-1296041">
    <property type="pathway name" value="Activation of G protein gated Potassium channels"/>
</dbReference>
<dbReference type="Reactome" id="R-HSA-163359">
    <property type="pathway name" value="Glucagon signaling in metabolic regulation"/>
</dbReference>
<dbReference type="Reactome" id="R-HSA-202040">
    <property type="pathway name" value="G-protein activation"/>
</dbReference>
<dbReference type="Reactome" id="R-HSA-381676">
    <property type="pathway name" value="Glucagon-like Peptide-1 (GLP1) regulates insulin secretion"/>
</dbReference>
<dbReference type="Reactome" id="R-HSA-392170">
    <property type="pathway name" value="ADP signalling through P2Y purinoceptor 12"/>
</dbReference>
<dbReference type="Reactome" id="R-HSA-392451">
    <property type="pathway name" value="G beta:gamma signalling through PI3Kgamma"/>
</dbReference>
<dbReference type="Reactome" id="R-HSA-392851">
    <property type="pathway name" value="Prostacyclin signalling through prostacyclin receptor"/>
</dbReference>
<dbReference type="Reactome" id="R-HSA-400042">
    <property type="pathway name" value="Adrenaline,noradrenaline inhibits insulin secretion"/>
</dbReference>
<dbReference type="Reactome" id="R-HSA-4086398">
    <property type="pathway name" value="Ca2+ pathway"/>
</dbReference>
<dbReference type="Reactome" id="R-HSA-416476">
    <property type="pathway name" value="G alpha (q) signalling events"/>
</dbReference>
<dbReference type="Reactome" id="R-HSA-416482">
    <property type="pathway name" value="G alpha (12/13) signalling events"/>
</dbReference>
<dbReference type="Reactome" id="R-HSA-418217">
    <property type="pathway name" value="G beta:gamma signalling through PLC beta"/>
</dbReference>
<dbReference type="Reactome" id="R-HSA-418555">
    <property type="pathway name" value="G alpha (s) signalling events"/>
</dbReference>
<dbReference type="Reactome" id="R-HSA-418592">
    <property type="pathway name" value="ADP signalling through P2Y purinoceptor 1"/>
</dbReference>
<dbReference type="Reactome" id="R-HSA-418594">
    <property type="pathway name" value="G alpha (i) signalling events"/>
</dbReference>
<dbReference type="Reactome" id="R-HSA-418597">
    <property type="pathway name" value="G alpha (z) signalling events"/>
</dbReference>
<dbReference type="Reactome" id="R-HSA-420092">
    <property type="pathway name" value="Glucagon-type ligand receptors"/>
</dbReference>
<dbReference type="Reactome" id="R-HSA-428930">
    <property type="pathway name" value="Thromboxane signalling through TP receptor"/>
</dbReference>
<dbReference type="Reactome" id="R-HSA-432040">
    <property type="pathway name" value="Vasopressin regulates renal water homeostasis via Aquaporins"/>
</dbReference>
<dbReference type="Reactome" id="R-HSA-456926">
    <property type="pathway name" value="Thrombin signalling through proteinase activated receptors (PARs)"/>
</dbReference>
<dbReference type="Reactome" id="R-HSA-500657">
    <property type="pathway name" value="Presynaptic function of Kainate receptors"/>
</dbReference>
<dbReference type="Reactome" id="R-HSA-6814122">
    <property type="pathway name" value="Cooperation of PDCL (PhLP1) and TRiC/CCT in G-protein beta folding"/>
</dbReference>
<dbReference type="Reactome" id="R-HSA-8964315">
    <property type="pathway name" value="G beta:gamma signalling through BTK"/>
</dbReference>
<dbReference type="Reactome" id="R-HSA-8964616">
    <property type="pathway name" value="G beta:gamma signalling through CDC42"/>
</dbReference>
<dbReference type="Reactome" id="R-HSA-9009391">
    <property type="pathway name" value="Extra-nuclear estrogen signaling"/>
</dbReference>
<dbReference type="Reactome" id="R-HSA-9634597">
    <property type="pathway name" value="GPER1 signaling"/>
</dbReference>
<dbReference type="Reactome" id="R-HSA-9660821">
    <property type="pathway name" value="ADORA2B mediated anti-inflammatory cytokines production"/>
</dbReference>
<dbReference type="Reactome" id="R-HSA-9856530">
    <property type="pathway name" value="High laminar flow shear stress activates signaling by PIEZO1 and PECAM1:CDH5:KDR in endothelial cells"/>
</dbReference>
<dbReference type="Reactome" id="R-HSA-997272">
    <property type="pathway name" value="Inhibition of voltage gated Ca2+ channels via Gbeta/gamma subunits"/>
</dbReference>
<dbReference type="SignaLink" id="P50151"/>
<dbReference type="BioGRID-ORCS" id="2790">
    <property type="hits" value="10 hits in 1078 CRISPR screens"/>
</dbReference>
<dbReference type="ChiTaRS" id="GNG10">
    <property type="organism name" value="human"/>
</dbReference>
<dbReference type="GenomeRNAi" id="2790"/>
<dbReference type="Pharos" id="P50151">
    <property type="development level" value="Tdark"/>
</dbReference>
<dbReference type="PRO" id="PR:P50151"/>
<dbReference type="Proteomes" id="UP000005640">
    <property type="component" value="Chromosome 9"/>
</dbReference>
<dbReference type="RNAct" id="P50151">
    <property type="molecule type" value="protein"/>
</dbReference>
<dbReference type="Bgee" id="ENSG00000242616">
    <property type="expression patterns" value="Expressed in monocyte and 100 other cell types or tissues"/>
</dbReference>
<dbReference type="ExpressionAtlas" id="P50151">
    <property type="expression patterns" value="baseline and differential"/>
</dbReference>
<dbReference type="GO" id="GO:0005834">
    <property type="term" value="C:heterotrimeric G-protein complex"/>
    <property type="evidence" value="ECO:0000318"/>
    <property type="project" value="GO_Central"/>
</dbReference>
<dbReference type="GO" id="GO:0005886">
    <property type="term" value="C:plasma membrane"/>
    <property type="evidence" value="ECO:0000304"/>
    <property type="project" value="Reactome"/>
</dbReference>
<dbReference type="GO" id="GO:0031681">
    <property type="term" value="F:G-protein beta-subunit binding"/>
    <property type="evidence" value="ECO:0000318"/>
    <property type="project" value="GO_Central"/>
</dbReference>
<dbReference type="GO" id="GO:0003924">
    <property type="term" value="F:GTPase activity"/>
    <property type="evidence" value="ECO:0000304"/>
    <property type="project" value="ProtInc"/>
</dbReference>
<dbReference type="GO" id="GO:0007186">
    <property type="term" value="P:G protein-coupled receptor signaling pathway"/>
    <property type="evidence" value="ECO:0000318"/>
    <property type="project" value="GO_Central"/>
</dbReference>
<dbReference type="GO" id="GO:0007165">
    <property type="term" value="P:signal transduction"/>
    <property type="evidence" value="ECO:0000304"/>
    <property type="project" value="ProtInc"/>
</dbReference>
<dbReference type="CDD" id="cd00068">
    <property type="entry name" value="GGL"/>
    <property type="match status" value="1"/>
</dbReference>
<dbReference type="FunFam" id="4.10.260.10:FF:000007">
    <property type="entry name" value="Guanine nucleotide-binding protein subunit gamma"/>
    <property type="match status" value="1"/>
</dbReference>
<dbReference type="Gene3D" id="4.10.260.10">
    <property type="entry name" value="Transducin (heterotrimeric G protein), gamma chain"/>
    <property type="match status" value="1"/>
</dbReference>
<dbReference type="InterPro" id="IPR015898">
    <property type="entry name" value="G-protein_gamma-like_dom"/>
</dbReference>
<dbReference type="InterPro" id="IPR036284">
    <property type="entry name" value="GGL_sf"/>
</dbReference>
<dbReference type="InterPro" id="IPR001770">
    <property type="entry name" value="Gprotein-gamma"/>
</dbReference>
<dbReference type="PANTHER" id="PTHR13809">
    <property type="entry name" value="GUANINE NUCLEOTIDE-BINDING PROTEIN GAMMA SUBUNIT"/>
    <property type="match status" value="1"/>
</dbReference>
<dbReference type="Pfam" id="PF00631">
    <property type="entry name" value="G-gamma"/>
    <property type="match status" value="1"/>
</dbReference>
<dbReference type="PRINTS" id="PR00321">
    <property type="entry name" value="GPROTEING"/>
</dbReference>
<dbReference type="SMART" id="SM01224">
    <property type="entry name" value="G_gamma"/>
    <property type="match status" value="1"/>
</dbReference>
<dbReference type="SMART" id="SM00224">
    <property type="entry name" value="GGL"/>
    <property type="match status" value="1"/>
</dbReference>
<dbReference type="SUPFAM" id="SSF48670">
    <property type="entry name" value="Transducin (heterotrimeric G protein), gamma chain"/>
    <property type="match status" value="1"/>
</dbReference>
<dbReference type="PROSITE" id="PS50058">
    <property type="entry name" value="G_PROTEIN_GAMMA"/>
    <property type="match status" value="1"/>
</dbReference>
<name>GBG10_HUMAN</name>
<evidence type="ECO:0000250" key="1"/>
<evidence type="ECO:0000269" key="2">
    <source>
    </source>
</evidence>
<evidence type="ECO:0000305" key="3"/>
<evidence type="ECO:0007744" key="4">
    <source>
    </source>
</evidence>
<sequence length="68" mass="7205">MSSGASASALQRLVEQLKLEAGVERIKVSQAAAELQQYCMQNACKDALLVGVPAGSNPFREPRSCALL</sequence>
<keyword id="KW-0007">Acetylation</keyword>
<keyword id="KW-1003">Cell membrane</keyword>
<keyword id="KW-0449">Lipoprotein</keyword>
<keyword id="KW-0472">Membrane</keyword>
<keyword id="KW-0488">Methylation</keyword>
<keyword id="KW-0636">Prenylation</keyword>
<keyword id="KW-1267">Proteomics identification</keyword>
<keyword id="KW-1185">Reference proteome</keyword>
<keyword id="KW-0807">Transducer</keyword>
<feature type="initiator methionine" description="Removed" evidence="4">
    <location>
        <position position="1"/>
    </location>
</feature>
<feature type="chain" id="PRO_0000012655" description="Guanine nucleotide-binding protein G(I)/G(S)/G(O) subunit gamma-10">
    <location>
        <begin position="2"/>
        <end position="65"/>
    </location>
</feature>
<feature type="propeptide" id="PRO_0000012656" description="Removed in mature form" evidence="1">
    <location>
        <begin position="66"/>
        <end position="68"/>
    </location>
</feature>
<feature type="modified residue" description="N-acetylserine" evidence="4">
    <location>
        <position position="2"/>
    </location>
</feature>
<feature type="modified residue" description="Cysteine methyl ester" evidence="1">
    <location>
        <position position="65"/>
    </location>
</feature>
<feature type="lipid moiety-binding region" description="S-geranylgeranyl cysteine" evidence="2">
    <location>
        <position position="65"/>
    </location>
</feature>
<accession>P50151</accession>
<accession>Q3B7K2</accession>
<accession>Q4VC27</accession>
<gene>
    <name type="primary">GNG10</name>
    <name type="synonym">GNGT10</name>
</gene>
<comment type="function">
    <text>Guanine nucleotide-binding proteins (G proteins) are involved as a modulator or transducer in various transmembrane signaling systems. The beta and gamma chains are required for the GTPase activity, for replacement of GDP by GTP, and for G protein-effector interaction. Interacts with beta-1 and beta-2, but not with beta-3.</text>
</comment>
<comment type="subunit">
    <text>G proteins are composed of 3 units, alpha, beta and gamma.</text>
</comment>
<comment type="interaction">
    <interactant intactId="EBI-10211741">
        <id>P50151</id>
    </interactant>
    <interactant intactId="EBI-356410">
        <id>P08779</id>
        <label>KRT16</label>
    </interactant>
    <organismsDiffer>false</organismsDiffer>
    <experiments>3</experiments>
</comment>
<comment type="interaction">
    <interactant intactId="EBI-10211741">
        <id>P50151</id>
    </interactant>
    <interactant intactId="EBI-948001">
        <id>Q15323</id>
        <label>KRT31</label>
    </interactant>
    <organismsDiffer>false</organismsDiffer>
    <experiments>3</experiments>
</comment>
<comment type="interaction">
    <interactant intactId="EBI-10211741">
        <id>P50151</id>
    </interactant>
    <interactant intactId="EBI-1047093">
        <id>O76011</id>
        <label>KRT34</label>
    </interactant>
    <organismsDiffer>false</organismsDiffer>
    <experiments>3</experiments>
</comment>
<comment type="interaction">
    <interactant intactId="EBI-10211741">
        <id>P50151</id>
    </interactant>
    <interactant intactId="EBI-1047263">
        <id>O76015</id>
        <label>KRT38</label>
    </interactant>
    <organismsDiffer>false</organismsDiffer>
    <experiments>6</experiments>
</comment>
<comment type="interaction">
    <interactant intactId="EBI-10211741">
        <id>P50151</id>
    </interactant>
    <interactant intactId="EBI-533224">
        <id>P15884</id>
        <label>TCF4</label>
    </interactant>
    <organismsDiffer>false</organismsDiffer>
    <experiments>3</experiments>
</comment>
<comment type="subcellular location">
    <subcellularLocation>
        <location evidence="3">Cell membrane</location>
        <topology evidence="3">Lipid-anchor</topology>
        <orientation evidence="3">Cytoplasmic side</orientation>
    </subcellularLocation>
</comment>
<comment type="tissue specificity">
    <text>Abundantly and ubiquitously expressed.</text>
</comment>
<comment type="similarity">
    <text evidence="3">Belongs to the G protein gamma family.</text>
</comment>
<protein>
    <recommendedName>
        <fullName>Guanine nucleotide-binding protein G(I)/G(S)/G(O) subunit gamma-10</fullName>
    </recommendedName>
</protein>
<organism>
    <name type="scientific">Homo sapiens</name>
    <name type="common">Human</name>
    <dbReference type="NCBI Taxonomy" id="9606"/>
    <lineage>
        <taxon>Eukaryota</taxon>
        <taxon>Metazoa</taxon>
        <taxon>Chordata</taxon>
        <taxon>Craniata</taxon>
        <taxon>Vertebrata</taxon>
        <taxon>Euteleostomi</taxon>
        <taxon>Mammalia</taxon>
        <taxon>Eutheria</taxon>
        <taxon>Euarchontoglires</taxon>
        <taxon>Primates</taxon>
        <taxon>Haplorrhini</taxon>
        <taxon>Catarrhini</taxon>
        <taxon>Hominidae</taxon>
        <taxon>Homo</taxon>
    </lineage>
</organism>